<evidence type="ECO:0000255" key="1">
    <source>
        <dbReference type="HAMAP-Rule" id="MF_02006"/>
    </source>
</evidence>
<gene>
    <name evidence="1" type="primary">tyrS</name>
    <name type="ordered locus">lp_2807</name>
</gene>
<feature type="chain" id="PRO_0000234718" description="Tyrosine--tRNA ligase">
    <location>
        <begin position="1"/>
        <end position="418"/>
    </location>
</feature>
<feature type="domain" description="S4 RNA-binding" evidence="1">
    <location>
        <begin position="350"/>
        <end position="418"/>
    </location>
</feature>
<feature type="short sequence motif" description="'HIGH' region">
    <location>
        <begin position="39"/>
        <end position="48"/>
    </location>
</feature>
<feature type="short sequence motif" description="'KMSKS' region">
    <location>
        <begin position="228"/>
        <end position="232"/>
    </location>
</feature>
<feature type="binding site" evidence="1">
    <location>
        <position position="34"/>
    </location>
    <ligand>
        <name>L-tyrosine</name>
        <dbReference type="ChEBI" id="CHEBI:58315"/>
    </ligand>
</feature>
<feature type="binding site" evidence="1">
    <location>
        <position position="166"/>
    </location>
    <ligand>
        <name>L-tyrosine</name>
        <dbReference type="ChEBI" id="CHEBI:58315"/>
    </ligand>
</feature>
<feature type="binding site" evidence="1">
    <location>
        <position position="170"/>
    </location>
    <ligand>
        <name>L-tyrosine</name>
        <dbReference type="ChEBI" id="CHEBI:58315"/>
    </ligand>
</feature>
<feature type="binding site" evidence="1">
    <location>
        <position position="231"/>
    </location>
    <ligand>
        <name>ATP</name>
        <dbReference type="ChEBI" id="CHEBI:30616"/>
    </ligand>
</feature>
<keyword id="KW-0030">Aminoacyl-tRNA synthetase</keyword>
<keyword id="KW-0067">ATP-binding</keyword>
<keyword id="KW-0963">Cytoplasm</keyword>
<keyword id="KW-0436">Ligase</keyword>
<keyword id="KW-0547">Nucleotide-binding</keyword>
<keyword id="KW-0648">Protein biosynthesis</keyword>
<keyword id="KW-1185">Reference proteome</keyword>
<keyword id="KW-0694">RNA-binding</keyword>
<dbReference type="EC" id="6.1.1.1" evidence="1"/>
<dbReference type="EMBL" id="AL935263">
    <property type="protein sequence ID" value="CCC79910.1"/>
    <property type="molecule type" value="Genomic_DNA"/>
</dbReference>
<dbReference type="RefSeq" id="WP_003642093.1">
    <property type="nucleotide sequence ID" value="NC_004567.2"/>
</dbReference>
<dbReference type="RefSeq" id="YP_004890424.1">
    <property type="nucleotide sequence ID" value="NC_004567.2"/>
</dbReference>
<dbReference type="SMR" id="Q88TV5"/>
<dbReference type="STRING" id="220668.lp_2807"/>
<dbReference type="EnsemblBacteria" id="CCC79910">
    <property type="protein sequence ID" value="CCC79910"/>
    <property type="gene ID" value="lp_2807"/>
</dbReference>
<dbReference type="GeneID" id="77216020"/>
<dbReference type="KEGG" id="lpl:lp_2807"/>
<dbReference type="PATRIC" id="fig|220668.9.peg.2350"/>
<dbReference type="eggNOG" id="COG0162">
    <property type="taxonomic scope" value="Bacteria"/>
</dbReference>
<dbReference type="HOGENOM" id="CLU_024003_0_3_9"/>
<dbReference type="OrthoDB" id="9804243at2"/>
<dbReference type="PhylomeDB" id="Q88TV5"/>
<dbReference type="Proteomes" id="UP000000432">
    <property type="component" value="Chromosome"/>
</dbReference>
<dbReference type="GO" id="GO:0005829">
    <property type="term" value="C:cytosol"/>
    <property type="evidence" value="ECO:0007669"/>
    <property type="project" value="TreeGrafter"/>
</dbReference>
<dbReference type="GO" id="GO:0005524">
    <property type="term" value="F:ATP binding"/>
    <property type="evidence" value="ECO:0007669"/>
    <property type="project" value="UniProtKB-UniRule"/>
</dbReference>
<dbReference type="GO" id="GO:0003723">
    <property type="term" value="F:RNA binding"/>
    <property type="evidence" value="ECO:0007669"/>
    <property type="project" value="UniProtKB-KW"/>
</dbReference>
<dbReference type="GO" id="GO:0004831">
    <property type="term" value="F:tyrosine-tRNA ligase activity"/>
    <property type="evidence" value="ECO:0007669"/>
    <property type="project" value="UniProtKB-UniRule"/>
</dbReference>
<dbReference type="GO" id="GO:0006437">
    <property type="term" value="P:tyrosyl-tRNA aminoacylation"/>
    <property type="evidence" value="ECO:0007669"/>
    <property type="project" value="UniProtKB-UniRule"/>
</dbReference>
<dbReference type="CDD" id="cd00165">
    <property type="entry name" value="S4"/>
    <property type="match status" value="1"/>
</dbReference>
<dbReference type="CDD" id="cd00805">
    <property type="entry name" value="TyrRS_core"/>
    <property type="match status" value="1"/>
</dbReference>
<dbReference type="FunFam" id="1.10.240.10:FF:000001">
    <property type="entry name" value="Tyrosine--tRNA ligase"/>
    <property type="match status" value="1"/>
</dbReference>
<dbReference type="FunFam" id="3.40.50.620:FF:000008">
    <property type="entry name" value="Tyrosine--tRNA ligase"/>
    <property type="match status" value="1"/>
</dbReference>
<dbReference type="Gene3D" id="3.40.50.620">
    <property type="entry name" value="HUPs"/>
    <property type="match status" value="1"/>
</dbReference>
<dbReference type="Gene3D" id="3.10.290.10">
    <property type="entry name" value="RNA-binding S4 domain"/>
    <property type="match status" value="1"/>
</dbReference>
<dbReference type="Gene3D" id="1.10.240.10">
    <property type="entry name" value="Tyrosyl-Transfer RNA Synthetase"/>
    <property type="match status" value="1"/>
</dbReference>
<dbReference type="HAMAP" id="MF_02006">
    <property type="entry name" value="Tyr_tRNA_synth_type1"/>
    <property type="match status" value="1"/>
</dbReference>
<dbReference type="InterPro" id="IPR001412">
    <property type="entry name" value="aa-tRNA-synth_I_CS"/>
</dbReference>
<dbReference type="InterPro" id="IPR002305">
    <property type="entry name" value="aa-tRNA-synth_Ic"/>
</dbReference>
<dbReference type="InterPro" id="IPR014729">
    <property type="entry name" value="Rossmann-like_a/b/a_fold"/>
</dbReference>
<dbReference type="InterPro" id="IPR002942">
    <property type="entry name" value="S4_RNA-bd"/>
</dbReference>
<dbReference type="InterPro" id="IPR036986">
    <property type="entry name" value="S4_RNA-bd_sf"/>
</dbReference>
<dbReference type="InterPro" id="IPR054608">
    <property type="entry name" value="SYY-like_C"/>
</dbReference>
<dbReference type="InterPro" id="IPR002307">
    <property type="entry name" value="Tyr-tRNA-ligase"/>
</dbReference>
<dbReference type="InterPro" id="IPR024088">
    <property type="entry name" value="Tyr-tRNA-ligase_bac-type"/>
</dbReference>
<dbReference type="InterPro" id="IPR024107">
    <property type="entry name" value="Tyr-tRNA-ligase_bac_1"/>
</dbReference>
<dbReference type="NCBIfam" id="TIGR00234">
    <property type="entry name" value="tyrS"/>
    <property type="match status" value="1"/>
</dbReference>
<dbReference type="PANTHER" id="PTHR11766:SF0">
    <property type="entry name" value="TYROSINE--TRNA LIGASE, MITOCHONDRIAL"/>
    <property type="match status" value="1"/>
</dbReference>
<dbReference type="PANTHER" id="PTHR11766">
    <property type="entry name" value="TYROSYL-TRNA SYNTHETASE"/>
    <property type="match status" value="1"/>
</dbReference>
<dbReference type="Pfam" id="PF22421">
    <property type="entry name" value="SYY_C-terminal"/>
    <property type="match status" value="1"/>
</dbReference>
<dbReference type="Pfam" id="PF00579">
    <property type="entry name" value="tRNA-synt_1b"/>
    <property type="match status" value="1"/>
</dbReference>
<dbReference type="PRINTS" id="PR01040">
    <property type="entry name" value="TRNASYNTHTYR"/>
</dbReference>
<dbReference type="SMART" id="SM00363">
    <property type="entry name" value="S4"/>
    <property type="match status" value="1"/>
</dbReference>
<dbReference type="SUPFAM" id="SSF55174">
    <property type="entry name" value="Alpha-L RNA-binding motif"/>
    <property type="match status" value="1"/>
</dbReference>
<dbReference type="SUPFAM" id="SSF52374">
    <property type="entry name" value="Nucleotidylyl transferase"/>
    <property type="match status" value="1"/>
</dbReference>
<dbReference type="PROSITE" id="PS00178">
    <property type="entry name" value="AA_TRNA_LIGASE_I"/>
    <property type="match status" value="1"/>
</dbReference>
<dbReference type="PROSITE" id="PS50889">
    <property type="entry name" value="S4"/>
    <property type="match status" value="1"/>
</dbReference>
<proteinExistence type="inferred from homology"/>
<sequence>MNIIDDLKWRGAINQQTDEAGLKELTENQSVSLYCGIDPTGDSMHIGHLIPFMILKRFQLAGHHPYVVVGGGTGAIGDPSGKNSERKLQTMDQVKHNQDGLSAQMYKLFGHDENFSIVNNYDWLSKISLLDFLRDYGKLFSVNTMLNKEVVASRLEVGISYTEFTYQILQSVDFLHLYRAEHVQLQIGGADQWGNITAGTDLIHRLEGNDAKAYGLTIPLLLKADGTKFGKTAGGAVWLNPERTSPYEFYQFWINQDDRDVVKYLKYFTFLSHEEIDRLAETVKTAPEKREAQRRLAEEVTEFVHGKQAVVEAENITKALFTGDVQSLTADEIEQGFKGVPSADVSAEKQNIVLWLVDATKFEPSRRQAREDIKNGAIRINGEKVTDVEAEIDPSAAFNGKFVIVRRGKKRYFLAHVK</sequence>
<reference key="1">
    <citation type="journal article" date="2003" name="Proc. Natl. Acad. Sci. U.S.A.">
        <title>Complete genome sequence of Lactobacillus plantarum WCFS1.</title>
        <authorList>
            <person name="Kleerebezem M."/>
            <person name="Boekhorst J."/>
            <person name="van Kranenburg R."/>
            <person name="Molenaar D."/>
            <person name="Kuipers O.P."/>
            <person name="Leer R."/>
            <person name="Tarchini R."/>
            <person name="Peters S.A."/>
            <person name="Sandbrink H.M."/>
            <person name="Fiers M.W.E.J."/>
            <person name="Stiekema W."/>
            <person name="Klein Lankhorst R.M."/>
            <person name="Bron P.A."/>
            <person name="Hoffer S.M."/>
            <person name="Nierop Groot M.N."/>
            <person name="Kerkhoven R."/>
            <person name="De Vries M."/>
            <person name="Ursing B."/>
            <person name="De Vos W.M."/>
            <person name="Siezen R.J."/>
        </authorList>
    </citation>
    <scope>NUCLEOTIDE SEQUENCE [LARGE SCALE GENOMIC DNA]</scope>
    <source>
        <strain>ATCC BAA-793 / NCIMB 8826 / WCFS1</strain>
    </source>
</reference>
<reference key="2">
    <citation type="journal article" date="2012" name="J. Bacteriol.">
        <title>Complete resequencing and reannotation of the Lactobacillus plantarum WCFS1 genome.</title>
        <authorList>
            <person name="Siezen R.J."/>
            <person name="Francke C."/>
            <person name="Renckens B."/>
            <person name="Boekhorst J."/>
            <person name="Wels M."/>
            <person name="Kleerebezem M."/>
            <person name="van Hijum S.A."/>
        </authorList>
    </citation>
    <scope>NUCLEOTIDE SEQUENCE [LARGE SCALE GENOMIC DNA]</scope>
    <scope>GENOME REANNOTATION</scope>
    <source>
        <strain>ATCC BAA-793 / NCIMB 8826 / WCFS1</strain>
    </source>
</reference>
<accession>Q88TV5</accession>
<accession>F9URS1</accession>
<organism>
    <name type="scientific">Lactiplantibacillus plantarum (strain ATCC BAA-793 / NCIMB 8826 / WCFS1)</name>
    <name type="common">Lactobacillus plantarum</name>
    <dbReference type="NCBI Taxonomy" id="220668"/>
    <lineage>
        <taxon>Bacteria</taxon>
        <taxon>Bacillati</taxon>
        <taxon>Bacillota</taxon>
        <taxon>Bacilli</taxon>
        <taxon>Lactobacillales</taxon>
        <taxon>Lactobacillaceae</taxon>
        <taxon>Lactiplantibacillus</taxon>
    </lineage>
</organism>
<comment type="function">
    <text evidence="1">Catalyzes the attachment of tyrosine to tRNA(Tyr) in a two-step reaction: tyrosine is first activated by ATP to form Tyr-AMP and then transferred to the acceptor end of tRNA(Tyr).</text>
</comment>
<comment type="catalytic activity">
    <reaction evidence="1">
        <text>tRNA(Tyr) + L-tyrosine + ATP = L-tyrosyl-tRNA(Tyr) + AMP + diphosphate + H(+)</text>
        <dbReference type="Rhea" id="RHEA:10220"/>
        <dbReference type="Rhea" id="RHEA-COMP:9706"/>
        <dbReference type="Rhea" id="RHEA-COMP:9707"/>
        <dbReference type="ChEBI" id="CHEBI:15378"/>
        <dbReference type="ChEBI" id="CHEBI:30616"/>
        <dbReference type="ChEBI" id="CHEBI:33019"/>
        <dbReference type="ChEBI" id="CHEBI:58315"/>
        <dbReference type="ChEBI" id="CHEBI:78442"/>
        <dbReference type="ChEBI" id="CHEBI:78536"/>
        <dbReference type="ChEBI" id="CHEBI:456215"/>
        <dbReference type="EC" id="6.1.1.1"/>
    </reaction>
</comment>
<comment type="subunit">
    <text evidence="1">Homodimer.</text>
</comment>
<comment type="subcellular location">
    <subcellularLocation>
        <location evidence="1">Cytoplasm</location>
    </subcellularLocation>
</comment>
<comment type="similarity">
    <text evidence="1">Belongs to the class-I aminoacyl-tRNA synthetase family. TyrS type 1 subfamily.</text>
</comment>
<protein>
    <recommendedName>
        <fullName evidence="1">Tyrosine--tRNA ligase</fullName>
        <ecNumber evidence="1">6.1.1.1</ecNumber>
    </recommendedName>
    <alternativeName>
        <fullName evidence="1">Tyrosyl-tRNA synthetase</fullName>
        <shortName evidence="1">TyrRS</shortName>
    </alternativeName>
</protein>
<name>SYY_LACPL</name>